<gene>
    <name evidence="1" type="primary">rnhB</name>
    <name type="ordered locus">Sca_0881</name>
</gene>
<feature type="chain" id="PRO_1000117685" description="Ribonuclease HII">
    <location>
        <begin position="1"/>
        <end position="261"/>
    </location>
</feature>
<feature type="domain" description="RNase H type-2" evidence="2">
    <location>
        <begin position="72"/>
        <end position="260"/>
    </location>
</feature>
<feature type="binding site" evidence="1">
    <location>
        <position position="78"/>
    </location>
    <ligand>
        <name>a divalent metal cation</name>
        <dbReference type="ChEBI" id="CHEBI:60240"/>
    </ligand>
</feature>
<feature type="binding site" evidence="1">
    <location>
        <position position="79"/>
    </location>
    <ligand>
        <name>a divalent metal cation</name>
        <dbReference type="ChEBI" id="CHEBI:60240"/>
    </ligand>
</feature>
<feature type="binding site" evidence="1">
    <location>
        <position position="170"/>
    </location>
    <ligand>
        <name>a divalent metal cation</name>
        <dbReference type="ChEBI" id="CHEBI:60240"/>
    </ligand>
</feature>
<sequence length="261" mass="28991">MAHSIKEVKALLKEIHNLKALDASEWNKDERKGVQQAIASRRKQLEKESALVAHYEEMTRYEENILSDNPEAVICGIDEVGRGPLAGPVVACAVILNADHAYYGLDDSKKVSAANRQKLSEALIEKTTAYAYGIATPEEIDDLNIYQATQVAMMRAIENLNVTPTHLLIDAMELPLDIAQTSIIKGDAKSVSIAAASILAKEHRDTYMRQLAEQYPGYDFEHNVGYGTKAHLEGIKRLGIIPEHRKSFEPIKSIVLEKLDI</sequence>
<dbReference type="EC" id="3.1.26.4" evidence="1"/>
<dbReference type="EMBL" id="AM295250">
    <property type="protein sequence ID" value="CAL27791.1"/>
    <property type="molecule type" value="Genomic_DNA"/>
</dbReference>
<dbReference type="RefSeq" id="WP_015900132.1">
    <property type="nucleotide sequence ID" value="NC_012121.1"/>
</dbReference>
<dbReference type="SMR" id="B9DPH3"/>
<dbReference type="GeneID" id="93793312"/>
<dbReference type="KEGG" id="sca:SCA_0881"/>
<dbReference type="eggNOG" id="COG0164">
    <property type="taxonomic scope" value="Bacteria"/>
</dbReference>
<dbReference type="HOGENOM" id="CLU_036532_2_1_9"/>
<dbReference type="OrthoDB" id="9803420at2"/>
<dbReference type="BioCyc" id="SCAR396513:SCA_RS04450-MONOMER"/>
<dbReference type="Proteomes" id="UP000000444">
    <property type="component" value="Chromosome"/>
</dbReference>
<dbReference type="GO" id="GO:0005737">
    <property type="term" value="C:cytoplasm"/>
    <property type="evidence" value="ECO:0007669"/>
    <property type="project" value="UniProtKB-SubCell"/>
</dbReference>
<dbReference type="GO" id="GO:0032299">
    <property type="term" value="C:ribonuclease H2 complex"/>
    <property type="evidence" value="ECO:0007669"/>
    <property type="project" value="TreeGrafter"/>
</dbReference>
<dbReference type="GO" id="GO:0030145">
    <property type="term" value="F:manganese ion binding"/>
    <property type="evidence" value="ECO:0007669"/>
    <property type="project" value="UniProtKB-UniRule"/>
</dbReference>
<dbReference type="GO" id="GO:0003723">
    <property type="term" value="F:RNA binding"/>
    <property type="evidence" value="ECO:0007669"/>
    <property type="project" value="InterPro"/>
</dbReference>
<dbReference type="GO" id="GO:0004523">
    <property type="term" value="F:RNA-DNA hybrid ribonuclease activity"/>
    <property type="evidence" value="ECO:0007669"/>
    <property type="project" value="UniProtKB-UniRule"/>
</dbReference>
<dbReference type="GO" id="GO:0043137">
    <property type="term" value="P:DNA replication, removal of RNA primer"/>
    <property type="evidence" value="ECO:0007669"/>
    <property type="project" value="TreeGrafter"/>
</dbReference>
<dbReference type="GO" id="GO:0006298">
    <property type="term" value="P:mismatch repair"/>
    <property type="evidence" value="ECO:0007669"/>
    <property type="project" value="TreeGrafter"/>
</dbReference>
<dbReference type="CDD" id="cd07182">
    <property type="entry name" value="RNase_HII_bacteria_HII_like"/>
    <property type="match status" value="1"/>
</dbReference>
<dbReference type="FunFam" id="3.30.420.10:FF:000006">
    <property type="entry name" value="Ribonuclease HII"/>
    <property type="match status" value="1"/>
</dbReference>
<dbReference type="Gene3D" id="3.30.420.10">
    <property type="entry name" value="Ribonuclease H-like superfamily/Ribonuclease H"/>
    <property type="match status" value="1"/>
</dbReference>
<dbReference type="HAMAP" id="MF_00052_B">
    <property type="entry name" value="RNase_HII_B"/>
    <property type="match status" value="1"/>
</dbReference>
<dbReference type="InterPro" id="IPR022898">
    <property type="entry name" value="RNase_HII"/>
</dbReference>
<dbReference type="InterPro" id="IPR001352">
    <property type="entry name" value="RNase_HII/HIII"/>
</dbReference>
<dbReference type="InterPro" id="IPR024567">
    <property type="entry name" value="RNase_HII/HIII_dom"/>
</dbReference>
<dbReference type="InterPro" id="IPR012337">
    <property type="entry name" value="RNaseH-like_sf"/>
</dbReference>
<dbReference type="InterPro" id="IPR036397">
    <property type="entry name" value="RNaseH_sf"/>
</dbReference>
<dbReference type="NCBIfam" id="NF000594">
    <property type="entry name" value="PRK00015.1-1"/>
    <property type="match status" value="1"/>
</dbReference>
<dbReference type="NCBIfam" id="NF000595">
    <property type="entry name" value="PRK00015.1-3"/>
    <property type="match status" value="1"/>
</dbReference>
<dbReference type="PANTHER" id="PTHR10954">
    <property type="entry name" value="RIBONUCLEASE H2 SUBUNIT A"/>
    <property type="match status" value="1"/>
</dbReference>
<dbReference type="PANTHER" id="PTHR10954:SF18">
    <property type="entry name" value="RIBONUCLEASE HII"/>
    <property type="match status" value="1"/>
</dbReference>
<dbReference type="Pfam" id="PF01351">
    <property type="entry name" value="RNase_HII"/>
    <property type="match status" value="1"/>
</dbReference>
<dbReference type="SUPFAM" id="SSF53098">
    <property type="entry name" value="Ribonuclease H-like"/>
    <property type="match status" value="1"/>
</dbReference>
<dbReference type="PROSITE" id="PS51975">
    <property type="entry name" value="RNASE_H_2"/>
    <property type="match status" value="1"/>
</dbReference>
<evidence type="ECO:0000255" key="1">
    <source>
        <dbReference type="HAMAP-Rule" id="MF_00052"/>
    </source>
</evidence>
<evidence type="ECO:0000255" key="2">
    <source>
        <dbReference type="PROSITE-ProRule" id="PRU01319"/>
    </source>
</evidence>
<reference key="1">
    <citation type="journal article" date="2009" name="Appl. Environ. Microbiol.">
        <title>Genome analysis of the meat starter culture bacterium Staphylococcus carnosus TM300.</title>
        <authorList>
            <person name="Rosenstein R."/>
            <person name="Nerz C."/>
            <person name="Biswas L."/>
            <person name="Resch A."/>
            <person name="Raddatz G."/>
            <person name="Schuster S.C."/>
            <person name="Goetz F."/>
        </authorList>
    </citation>
    <scope>NUCLEOTIDE SEQUENCE [LARGE SCALE GENOMIC DNA]</scope>
    <source>
        <strain>TM300</strain>
    </source>
</reference>
<protein>
    <recommendedName>
        <fullName evidence="1">Ribonuclease HII</fullName>
        <shortName evidence="1">RNase HII</shortName>
        <ecNumber evidence="1">3.1.26.4</ecNumber>
    </recommendedName>
</protein>
<comment type="function">
    <text evidence="1">Endonuclease that specifically degrades the RNA of RNA-DNA hybrids.</text>
</comment>
<comment type="catalytic activity">
    <reaction evidence="1">
        <text>Endonucleolytic cleavage to 5'-phosphomonoester.</text>
        <dbReference type="EC" id="3.1.26.4"/>
    </reaction>
</comment>
<comment type="cofactor">
    <cofactor evidence="1">
        <name>Mn(2+)</name>
        <dbReference type="ChEBI" id="CHEBI:29035"/>
    </cofactor>
    <cofactor evidence="1">
        <name>Mg(2+)</name>
        <dbReference type="ChEBI" id="CHEBI:18420"/>
    </cofactor>
    <text evidence="1">Manganese or magnesium. Binds 1 divalent metal ion per monomer in the absence of substrate. May bind a second metal ion after substrate binding.</text>
</comment>
<comment type="subcellular location">
    <subcellularLocation>
        <location evidence="1">Cytoplasm</location>
    </subcellularLocation>
</comment>
<comment type="similarity">
    <text evidence="1">Belongs to the RNase HII family.</text>
</comment>
<keyword id="KW-0963">Cytoplasm</keyword>
<keyword id="KW-0255">Endonuclease</keyword>
<keyword id="KW-0378">Hydrolase</keyword>
<keyword id="KW-0464">Manganese</keyword>
<keyword id="KW-0479">Metal-binding</keyword>
<keyword id="KW-0540">Nuclease</keyword>
<keyword id="KW-1185">Reference proteome</keyword>
<name>RNH2_STACT</name>
<organism>
    <name type="scientific">Staphylococcus carnosus (strain TM300)</name>
    <dbReference type="NCBI Taxonomy" id="396513"/>
    <lineage>
        <taxon>Bacteria</taxon>
        <taxon>Bacillati</taxon>
        <taxon>Bacillota</taxon>
        <taxon>Bacilli</taxon>
        <taxon>Bacillales</taxon>
        <taxon>Staphylococcaceae</taxon>
        <taxon>Staphylococcus</taxon>
    </lineage>
</organism>
<proteinExistence type="inferred from homology"/>
<accession>B9DPH3</accession>